<sequence>MPAKFIFVTGGVTSSLGKGITAASLGRLLKSRGLKVAIQKFDPYINIDPGTMSPYQHGEVFVTDDGAETDLDLGHYERFIDISLTKASNVTAGKVYWSVITKERRGDFLGGTVQVIPHITNEIKARLLRVAEESDPDVVITEIGGTVGDIESLPFLEAIRQMKSDIGRDRVLYIHVTLVPYLRAAGEAKTKPTQHSVKELRSIGIQPDIIVCRTERPFSREMEEKIALFCDIDPDAVIQAWDADSIYEVPLMMQEEGLDSIVVERLKLNCGPAQMDDWRAMVAKLKNITRHLEIALVGKYVTLPDAYLSVVESLRHAGMYHNVQVDIRWIYSADLERGGLEQLQDVAGILVPGGFGDRGVEGKIIAARYAREHGIPFLGICLGMQLAVVEFARHVCGLEAANSSEFNPETPHPVIDLLPEQKEIEDKGGTMRLGLYPCRLQPGTRAHQAYGEEIIYERHRHRYEFNNNYRAELTARGMVISGTSPDDRLVEIIELADHPWFVACQFHPEFKSRPNRPHPLFRDFIGAACRRAGGGAG</sequence>
<name>PYRG_MOOTA</name>
<proteinExistence type="inferred from homology"/>
<dbReference type="EC" id="6.3.4.2" evidence="1"/>
<dbReference type="EMBL" id="CP000232">
    <property type="protein sequence ID" value="ABC20691.1"/>
    <property type="molecule type" value="Genomic_DNA"/>
</dbReference>
<dbReference type="RefSeq" id="YP_431234.1">
    <property type="nucleotide sequence ID" value="NC_007644.1"/>
</dbReference>
<dbReference type="SMR" id="Q2RFU8"/>
<dbReference type="STRING" id="264732.Moth_2409"/>
<dbReference type="MEROPS" id="C26.964"/>
<dbReference type="EnsemblBacteria" id="ABC20691">
    <property type="protein sequence ID" value="ABC20691"/>
    <property type="gene ID" value="Moth_2409"/>
</dbReference>
<dbReference type="KEGG" id="mta:Moth_2409"/>
<dbReference type="PATRIC" id="fig|264732.11.peg.2623"/>
<dbReference type="eggNOG" id="COG0504">
    <property type="taxonomic scope" value="Bacteria"/>
</dbReference>
<dbReference type="HOGENOM" id="CLU_011675_5_0_9"/>
<dbReference type="OrthoDB" id="9801107at2"/>
<dbReference type="UniPathway" id="UPA00159">
    <property type="reaction ID" value="UER00277"/>
</dbReference>
<dbReference type="GO" id="GO:0005829">
    <property type="term" value="C:cytosol"/>
    <property type="evidence" value="ECO:0007669"/>
    <property type="project" value="TreeGrafter"/>
</dbReference>
<dbReference type="GO" id="GO:0005524">
    <property type="term" value="F:ATP binding"/>
    <property type="evidence" value="ECO:0007669"/>
    <property type="project" value="UniProtKB-KW"/>
</dbReference>
<dbReference type="GO" id="GO:0003883">
    <property type="term" value="F:CTP synthase activity"/>
    <property type="evidence" value="ECO:0007669"/>
    <property type="project" value="UniProtKB-UniRule"/>
</dbReference>
<dbReference type="GO" id="GO:0004359">
    <property type="term" value="F:glutaminase activity"/>
    <property type="evidence" value="ECO:0007669"/>
    <property type="project" value="RHEA"/>
</dbReference>
<dbReference type="GO" id="GO:0042802">
    <property type="term" value="F:identical protein binding"/>
    <property type="evidence" value="ECO:0007669"/>
    <property type="project" value="TreeGrafter"/>
</dbReference>
<dbReference type="GO" id="GO:0046872">
    <property type="term" value="F:metal ion binding"/>
    <property type="evidence" value="ECO:0007669"/>
    <property type="project" value="UniProtKB-KW"/>
</dbReference>
<dbReference type="GO" id="GO:0044210">
    <property type="term" value="P:'de novo' CTP biosynthetic process"/>
    <property type="evidence" value="ECO:0007669"/>
    <property type="project" value="UniProtKB-UniRule"/>
</dbReference>
<dbReference type="GO" id="GO:0019856">
    <property type="term" value="P:pyrimidine nucleobase biosynthetic process"/>
    <property type="evidence" value="ECO:0007669"/>
    <property type="project" value="TreeGrafter"/>
</dbReference>
<dbReference type="CDD" id="cd03113">
    <property type="entry name" value="CTPS_N"/>
    <property type="match status" value="1"/>
</dbReference>
<dbReference type="CDD" id="cd01746">
    <property type="entry name" value="GATase1_CTP_Synthase"/>
    <property type="match status" value="1"/>
</dbReference>
<dbReference type="FunFam" id="3.40.50.300:FF:000009">
    <property type="entry name" value="CTP synthase"/>
    <property type="match status" value="1"/>
</dbReference>
<dbReference type="FunFam" id="3.40.50.880:FF:000002">
    <property type="entry name" value="CTP synthase"/>
    <property type="match status" value="1"/>
</dbReference>
<dbReference type="Gene3D" id="3.40.50.880">
    <property type="match status" value="1"/>
</dbReference>
<dbReference type="Gene3D" id="3.40.50.300">
    <property type="entry name" value="P-loop containing nucleotide triphosphate hydrolases"/>
    <property type="match status" value="1"/>
</dbReference>
<dbReference type="HAMAP" id="MF_01227">
    <property type="entry name" value="PyrG"/>
    <property type="match status" value="1"/>
</dbReference>
<dbReference type="InterPro" id="IPR029062">
    <property type="entry name" value="Class_I_gatase-like"/>
</dbReference>
<dbReference type="InterPro" id="IPR004468">
    <property type="entry name" value="CTP_synthase"/>
</dbReference>
<dbReference type="InterPro" id="IPR017456">
    <property type="entry name" value="CTP_synthase_N"/>
</dbReference>
<dbReference type="InterPro" id="IPR017926">
    <property type="entry name" value="GATASE"/>
</dbReference>
<dbReference type="InterPro" id="IPR033828">
    <property type="entry name" value="GATase1_CTP_Synthase"/>
</dbReference>
<dbReference type="InterPro" id="IPR027417">
    <property type="entry name" value="P-loop_NTPase"/>
</dbReference>
<dbReference type="NCBIfam" id="NF003792">
    <property type="entry name" value="PRK05380.1"/>
    <property type="match status" value="1"/>
</dbReference>
<dbReference type="NCBIfam" id="TIGR00337">
    <property type="entry name" value="PyrG"/>
    <property type="match status" value="1"/>
</dbReference>
<dbReference type="PANTHER" id="PTHR11550">
    <property type="entry name" value="CTP SYNTHASE"/>
    <property type="match status" value="1"/>
</dbReference>
<dbReference type="PANTHER" id="PTHR11550:SF0">
    <property type="entry name" value="CTP SYNTHASE-RELATED"/>
    <property type="match status" value="1"/>
</dbReference>
<dbReference type="Pfam" id="PF06418">
    <property type="entry name" value="CTP_synth_N"/>
    <property type="match status" value="1"/>
</dbReference>
<dbReference type="Pfam" id="PF00117">
    <property type="entry name" value="GATase"/>
    <property type="match status" value="1"/>
</dbReference>
<dbReference type="SUPFAM" id="SSF52317">
    <property type="entry name" value="Class I glutamine amidotransferase-like"/>
    <property type="match status" value="1"/>
</dbReference>
<dbReference type="SUPFAM" id="SSF52540">
    <property type="entry name" value="P-loop containing nucleoside triphosphate hydrolases"/>
    <property type="match status" value="1"/>
</dbReference>
<dbReference type="PROSITE" id="PS51273">
    <property type="entry name" value="GATASE_TYPE_1"/>
    <property type="match status" value="1"/>
</dbReference>
<feature type="chain" id="PRO_0000266155" description="CTP synthase">
    <location>
        <begin position="1"/>
        <end position="537"/>
    </location>
</feature>
<feature type="domain" description="Glutamine amidotransferase type-1" evidence="1">
    <location>
        <begin position="293"/>
        <end position="534"/>
    </location>
</feature>
<feature type="region of interest" description="Amidoligase domain" evidence="1">
    <location>
        <begin position="1"/>
        <end position="268"/>
    </location>
</feature>
<feature type="active site" description="Nucleophile; for glutamine hydrolysis" evidence="1">
    <location>
        <position position="381"/>
    </location>
</feature>
<feature type="active site" evidence="1">
    <location>
        <position position="507"/>
    </location>
</feature>
<feature type="active site" evidence="1">
    <location>
        <position position="509"/>
    </location>
</feature>
<feature type="binding site" evidence="1">
    <location>
        <position position="14"/>
    </location>
    <ligand>
        <name>CTP</name>
        <dbReference type="ChEBI" id="CHEBI:37563"/>
        <note>allosteric inhibitor</note>
    </ligand>
</feature>
<feature type="binding site" evidence="1">
    <location>
        <position position="14"/>
    </location>
    <ligand>
        <name>UTP</name>
        <dbReference type="ChEBI" id="CHEBI:46398"/>
    </ligand>
</feature>
<feature type="binding site" evidence="1">
    <location>
        <begin position="15"/>
        <end position="20"/>
    </location>
    <ligand>
        <name>ATP</name>
        <dbReference type="ChEBI" id="CHEBI:30616"/>
    </ligand>
</feature>
<feature type="binding site" evidence="1">
    <location>
        <position position="55"/>
    </location>
    <ligand>
        <name>L-glutamine</name>
        <dbReference type="ChEBI" id="CHEBI:58359"/>
    </ligand>
</feature>
<feature type="binding site" evidence="1">
    <location>
        <position position="72"/>
    </location>
    <ligand>
        <name>ATP</name>
        <dbReference type="ChEBI" id="CHEBI:30616"/>
    </ligand>
</feature>
<feature type="binding site" evidence="1">
    <location>
        <position position="72"/>
    </location>
    <ligand>
        <name>Mg(2+)</name>
        <dbReference type="ChEBI" id="CHEBI:18420"/>
    </ligand>
</feature>
<feature type="binding site" evidence="1">
    <location>
        <position position="142"/>
    </location>
    <ligand>
        <name>Mg(2+)</name>
        <dbReference type="ChEBI" id="CHEBI:18420"/>
    </ligand>
</feature>
<feature type="binding site" evidence="1">
    <location>
        <begin position="149"/>
        <end position="151"/>
    </location>
    <ligand>
        <name>CTP</name>
        <dbReference type="ChEBI" id="CHEBI:37563"/>
        <note>allosteric inhibitor</note>
    </ligand>
</feature>
<feature type="binding site" evidence="1">
    <location>
        <begin position="189"/>
        <end position="194"/>
    </location>
    <ligand>
        <name>CTP</name>
        <dbReference type="ChEBI" id="CHEBI:37563"/>
        <note>allosteric inhibitor</note>
    </ligand>
</feature>
<feature type="binding site" evidence="1">
    <location>
        <begin position="189"/>
        <end position="194"/>
    </location>
    <ligand>
        <name>UTP</name>
        <dbReference type="ChEBI" id="CHEBI:46398"/>
    </ligand>
</feature>
<feature type="binding site" evidence="1">
    <location>
        <position position="225"/>
    </location>
    <ligand>
        <name>CTP</name>
        <dbReference type="ChEBI" id="CHEBI:37563"/>
        <note>allosteric inhibitor</note>
    </ligand>
</feature>
<feature type="binding site" evidence="1">
    <location>
        <position position="225"/>
    </location>
    <ligand>
        <name>UTP</name>
        <dbReference type="ChEBI" id="CHEBI:46398"/>
    </ligand>
</feature>
<feature type="binding site" evidence="1">
    <location>
        <position position="354"/>
    </location>
    <ligand>
        <name>L-glutamine</name>
        <dbReference type="ChEBI" id="CHEBI:58359"/>
    </ligand>
</feature>
<feature type="binding site" evidence="1">
    <location>
        <begin position="382"/>
        <end position="385"/>
    </location>
    <ligand>
        <name>L-glutamine</name>
        <dbReference type="ChEBI" id="CHEBI:58359"/>
    </ligand>
</feature>
<feature type="binding site" evidence="1">
    <location>
        <position position="405"/>
    </location>
    <ligand>
        <name>L-glutamine</name>
        <dbReference type="ChEBI" id="CHEBI:58359"/>
    </ligand>
</feature>
<feature type="binding site" evidence="1">
    <location>
        <position position="462"/>
    </location>
    <ligand>
        <name>L-glutamine</name>
        <dbReference type="ChEBI" id="CHEBI:58359"/>
    </ligand>
</feature>
<evidence type="ECO:0000255" key="1">
    <source>
        <dbReference type="HAMAP-Rule" id="MF_01227"/>
    </source>
</evidence>
<protein>
    <recommendedName>
        <fullName evidence="1">CTP synthase</fullName>
        <ecNumber evidence="1">6.3.4.2</ecNumber>
    </recommendedName>
    <alternativeName>
        <fullName evidence="1">Cytidine 5'-triphosphate synthase</fullName>
    </alternativeName>
    <alternativeName>
        <fullName evidence="1">Cytidine triphosphate synthetase</fullName>
        <shortName evidence="1">CTP synthetase</shortName>
        <shortName evidence="1">CTPS</shortName>
    </alternativeName>
    <alternativeName>
        <fullName evidence="1">UTP--ammonia ligase</fullName>
    </alternativeName>
</protein>
<organism>
    <name type="scientific">Moorella thermoacetica (strain ATCC 39073 / JCM 9320)</name>
    <dbReference type="NCBI Taxonomy" id="264732"/>
    <lineage>
        <taxon>Bacteria</taxon>
        <taxon>Bacillati</taxon>
        <taxon>Bacillota</taxon>
        <taxon>Clostridia</taxon>
        <taxon>Moorellales</taxon>
        <taxon>Moorellaceae</taxon>
        <taxon>Moorella</taxon>
    </lineage>
</organism>
<gene>
    <name evidence="1" type="primary">pyrG</name>
    <name type="ordered locus">Moth_2409</name>
</gene>
<comment type="function">
    <text evidence="1">Catalyzes the ATP-dependent amination of UTP to CTP with either L-glutamine or ammonia as the source of nitrogen. Regulates intracellular CTP levels through interactions with the four ribonucleotide triphosphates.</text>
</comment>
<comment type="catalytic activity">
    <reaction evidence="1">
        <text>UTP + L-glutamine + ATP + H2O = CTP + L-glutamate + ADP + phosphate + 2 H(+)</text>
        <dbReference type="Rhea" id="RHEA:26426"/>
        <dbReference type="ChEBI" id="CHEBI:15377"/>
        <dbReference type="ChEBI" id="CHEBI:15378"/>
        <dbReference type="ChEBI" id="CHEBI:29985"/>
        <dbReference type="ChEBI" id="CHEBI:30616"/>
        <dbReference type="ChEBI" id="CHEBI:37563"/>
        <dbReference type="ChEBI" id="CHEBI:43474"/>
        <dbReference type="ChEBI" id="CHEBI:46398"/>
        <dbReference type="ChEBI" id="CHEBI:58359"/>
        <dbReference type="ChEBI" id="CHEBI:456216"/>
        <dbReference type="EC" id="6.3.4.2"/>
    </reaction>
</comment>
<comment type="catalytic activity">
    <reaction evidence="1">
        <text>L-glutamine + H2O = L-glutamate + NH4(+)</text>
        <dbReference type="Rhea" id="RHEA:15889"/>
        <dbReference type="ChEBI" id="CHEBI:15377"/>
        <dbReference type="ChEBI" id="CHEBI:28938"/>
        <dbReference type="ChEBI" id="CHEBI:29985"/>
        <dbReference type="ChEBI" id="CHEBI:58359"/>
    </reaction>
</comment>
<comment type="catalytic activity">
    <reaction evidence="1">
        <text>UTP + NH4(+) + ATP = CTP + ADP + phosphate + 2 H(+)</text>
        <dbReference type="Rhea" id="RHEA:16597"/>
        <dbReference type="ChEBI" id="CHEBI:15378"/>
        <dbReference type="ChEBI" id="CHEBI:28938"/>
        <dbReference type="ChEBI" id="CHEBI:30616"/>
        <dbReference type="ChEBI" id="CHEBI:37563"/>
        <dbReference type="ChEBI" id="CHEBI:43474"/>
        <dbReference type="ChEBI" id="CHEBI:46398"/>
        <dbReference type="ChEBI" id="CHEBI:456216"/>
    </reaction>
</comment>
<comment type="activity regulation">
    <text evidence="1">Allosterically activated by GTP, when glutamine is the substrate; GTP has no effect on the reaction when ammonia is the substrate. The allosteric effector GTP functions by stabilizing the protein conformation that binds the tetrahedral intermediate(s) formed during glutamine hydrolysis. Inhibited by the product CTP, via allosteric rather than competitive inhibition.</text>
</comment>
<comment type="pathway">
    <text evidence="1">Pyrimidine metabolism; CTP biosynthesis via de novo pathway; CTP from UDP: step 2/2.</text>
</comment>
<comment type="subunit">
    <text evidence="1">Homotetramer.</text>
</comment>
<comment type="miscellaneous">
    <text evidence="1">CTPSs have evolved a hybrid strategy for distinguishing between UTP and CTP. The overlapping regions of the product feedback inhibitory and substrate sites recognize a common feature in both compounds, the triphosphate moiety. To differentiate isosteric substrate and product pyrimidine rings, an additional pocket far from the expected kinase/ligase catalytic site, specifically recognizes the cytosine and ribose portions of the product inhibitor.</text>
</comment>
<comment type="similarity">
    <text evidence="1">Belongs to the CTP synthase family.</text>
</comment>
<reference key="1">
    <citation type="journal article" date="2008" name="Environ. Microbiol.">
        <title>The complete genome sequence of Moorella thermoacetica (f. Clostridium thermoaceticum).</title>
        <authorList>
            <person name="Pierce E."/>
            <person name="Xie G."/>
            <person name="Barabote R.D."/>
            <person name="Saunders E."/>
            <person name="Han C.S."/>
            <person name="Detter J.C."/>
            <person name="Richardson P."/>
            <person name="Brettin T.S."/>
            <person name="Das A."/>
            <person name="Ljungdahl L.G."/>
            <person name="Ragsdale S.W."/>
        </authorList>
    </citation>
    <scope>NUCLEOTIDE SEQUENCE [LARGE SCALE GENOMIC DNA]</scope>
    <source>
        <strain>ATCC 39073 / JCM 9320</strain>
    </source>
</reference>
<keyword id="KW-0067">ATP-binding</keyword>
<keyword id="KW-0315">Glutamine amidotransferase</keyword>
<keyword id="KW-0436">Ligase</keyword>
<keyword id="KW-0460">Magnesium</keyword>
<keyword id="KW-0479">Metal-binding</keyword>
<keyword id="KW-0547">Nucleotide-binding</keyword>
<keyword id="KW-0665">Pyrimidine biosynthesis</keyword>
<accession>Q2RFU8</accession>